<proteinExistence type="predicted"/>
<accession>F7YJG6</accession>
<accession>Q56592</accession>
<evidence type="ECO:0000305" key="1"/>
<reference key="1">
    <citation type="journal article" date="1993" name="Infect. Immun.">
        <title>Characterization of a novel chromosomal virulence locus involved in expression of a major surface flagellar sheath antigen of the fish pathogen Vibrio anguillarum.</title>
        <authorList>
            <person name="Norqvist A."/>
            <person name="Wolf-Watz H."/>
        </authorList>
    </citation>
    <scope>NUCLEOTIDE SEQUENCE [GENOMIC DNA]</scope>
    <scope>POSSIBLE FUNCTION</scope>
    <source>
        <strain>ATCC 68554 / 775 / 775.17</strain>
    </source>
</reference>
<reference key="2">
    <citation type="journal article" date="2011" name="Infect. Immun.">
        <title>Complete genome sequence of the marine fish pathogen Vibrio anguillarum harboring the pJM1 virulence plasmid and genomic comparison with other virulent strains of V. anguillarum and V. ordalii.</title>
        <authorList>
            <person name="Naka H."/>
            <person name="Dias G.M."/>
            <person name="Thompson C.C."/>
            <person name="Dubay C."/>
            <person name="Thompson F.L."/>
            <person name="Crosa J.H."/>
        </authorList>
    </citation>
    <scope>NUCLEOTIDE SEQUENCE [LARGE SCALE GENOMIC DNA]</scope>
    <source>
        <strain>ATCC 68554 / 775</strain>
    </source>
</reference>
<comment type="function">
    <text>Could be involved in the biosynthesis of a major surface antigen important for virulence.</text>
</comment>
<comment type="sequence caution" evidence="1">
    <conflict type="erroneous initiation">
        <sequence resource="EMBL-CDS" id="AEH32014"/>
    </conflict>
    <text>Extended N-terminus.</text>
</comment>
<name>VIRA_VIBA7</name>
<organism>
    <name type="scientific">Vibrio anguillarum (strain ATCC 68554 / 775)</name>
    <name type="common">Listonella anguillarum</name>
    <dbReference type="NCBI Taxonomy" id="882102"/>
    <lineage>
        <taxon>Bacteria</taxon>
        <taxon>Pseudomonadati</taxon>
        <taxon>Pseudomonadota</taxon>
        <taxon>Gammaproteobacteria</taxon>
        <taxon>Vibrionales</taxon>
        <taxon>Vibrionaceae</taxon>
        <taxon>Vibrio</taxon>
    </lineage>
</organism>
<feature type="chain" id="PRO_0000417120" description="Virulence protein VirA">
    <location>
        <begin position="1"/>
        <end position="304"/>
    </location>
</feature>
<gene>
    <name type="primary">virA</name>
    <name type="ordered locus">VAA_03885</name>
</gene>
<protein>
    <recommendedName>
        <fullName>Virulence protein VirA</fullName>
    </recommendedName>
</protein>
<dbReference type="EMBL" id="L08012">
    <property type="protein sequence ID" value="AAA27581.1"/>
    <property type="molecule type" value="Genomic_DNA"/>
</dbReference>
<dbReference type="EMBL" id="CP002284">
    <property type="protein sequence ID" value="AEH32014.1"/>
    <property type="status" value="ALT_INIT"/>
    <property type="molecule type" value="Genomic_DNA"/>
</dbReference>
<dbReference type="RefSeq" id="WP_019281209.1">
    <property type="nucleotide sequence ID" value="NC_015633.1"/>
</dbReference>
<dbReference type="KEGG" id="van:VAA_03885"/>
<dbReference type="eggNOG" id="COG3754">
    <property type="taxonomic scope" value="Bacteria"/>
</dbReference>
<dbReference type="HOGENOM" id="CLU_914657_0_0_6"/>
<dbReference type="InterPro" id="IPR007739">
    <property type="entry name" value="RgpF"/>
</dbReference>
<dbReference type="Pfam" id="PF05045">
    <property type="entry name" value="RgpF"/>
    <property type="match status" value="1"/>
</dbReference>
<keyword id="KW-0843">Virulence</keyword>
<sequence>MKYPRSLSWEKISSSTISIREFNRFENKKKVAIFCGYVRDKYEFNYHDRTYQWLRNNDYYVILVMPKSGILLESDLCKACDVFIERENFGYDFGSYACGLQYVNLIEGSERIDRLLFVNDSFIGPFGYCNLIEDSSEFWGNTDSNQVKYHYQSYLFGFNLEKVNLDIINNFFFSRGDIYTDDKSLVIENFELSLYEYFNGKGLRCSVLHPISVLKSDFIKQTFHFISYPYLTSKIFFYIMVIARDVNPTHQLWLQLFKRGFPFIKKELLRDNPTGYPELYKKVEEVMGSNDFNGEYKQIFKNHL</sequence>